<comment type="function">
    <text evidence="1">Component of the cytochrome c oxidase, the last enzyme in the mitochondrial electron transport chain which drives oxidative phosphorylation. The respiratory chain contains 3 multisubunit complexes succinate dehydrogenase (complex II, CII), ubiquinol-cytochrome c oxidoreductase (cytochrome b-c1 complex, complex III, CIII) and cytochrome c oxidase (complex IV, CIV), that cooperate to transfer electrons derived from NADH and succinate to molecular oxygen, creating an electrochemical gradient over the inner membrane that drives transmembrane transport and the ATP synthase. Cytochrome c oxidase is the component of the respiratory chain that catalyzes the reduction of oxygen to water. Electrons originating from reduced cytochrome c in the intermembrane space (IMS) are transferred via the dinuclear copper A center (CU(A)) of subunit 2 and heme A of subunit 1 to the active site in subunit 1, a binuclear center (BNC) formed by heme A3 and copper B (CU(B)). The BNC reduces molecular oxygen to 2 water molecules using 4 electrons from cytochrome c in the IMS and 4 protons from the mitochondrial matrix.</text>
</comment>
<comment type="pathway">
    <text evidence="1">Energy metabolism; oxidative phosphorylation.</text>
</comment>
<comment type="subunit">
    <text evidence="1">Component of the cytochrome c oxidase (complex IV, CIV), a multisubunit enzyme composed of a catalytic core of 3 subunits and several supernumerary subunits. The complex exists as a monomer or a dimer and forms supercomplexes (SCs) in the inner mitochondrial membrane with ubiquinol-cytochrome c oxidoreductase (cytochrome b-c1 complex, complex III, CIII).</text>
</comment>
<comment type="subcellular location">
    <subcellularLocation>
        <location evidence="1">Mitochondrion inner membrane</location>
        <topology evidence="1">Single-pass membrane protein</topology>
    </subcellularLocation>
</comment>
<comment type="similarity">
    <text evidence="3">Belongs to the fungal cytochrome c oxidase subunit 7a family.</text>
</comment>
<gene>
    <name type="primary">COX9</name>
    <name type="ordered locus">KLLA0B03289g</name>
</gene>
<feature type="chain" id="PRO_0000041769" description="Cytochrome c oxidase subunit 9, mitochondrial">
    <location>
        <begin position="1"/>
        <end position="57"/>
    </location>
</feature>
<feature type="propeptide" id="PRO_0000041770" description="Removed in mature form" evidence="1">
    <location>
        <begin position="58"/>
        <end position="60"/>
    </location>
</feature>
<feature type="topological domain" description="Mitochondrial matrix" evidence="1">
    <location>
        <begin position="1"/>
        <end position="15"/>
    </location>
</feature>
<feature type="transmembrane region" description="Helical" evidence="2">
    <location>
        <begin position="16"/>
        <end position="38"/>
    </location>
</feature>
<feature type="topological domain" description="Mitochondrial intermembrane" evidence="1">
    <location>
        <begin position="39"/>
        <end position="57"/>
    </location>
</feature>
<sequence length="60" mass="6729">MSAIAPITGTIRKRILADITIGFAIGGAMASYWWWGFHKNIINKREAYYAKLAEQKAAEN</sequence>
<reference key="1">
    <citation type="journal article" date="2004" name="Nature">
        <title>Genome evolution in yeasts.</title>
        <authorList>
            <person name="Dujon B."/>
            <person name="Sherman D."/>
            <person name="Fischer G."/>
            <person name="Durrens P."/>
            <person name="Casaregola S."/>
            <person name="Lafontaine I."/>
            <person name="de Montigny J."/>
            <person name="Marck C."/>
            <person name="Neuveglise C."/>
            <person name="Talla E."/>
            <person name="Goffard N."/>
            <person name="Frangeul L."/>
            <person name="Aigle M."/>
            <person name="Anthouard V."/>
            <person name="Babour A."/>
            <person name="Barbe V."/>
            <person name="Barnay S."/>
            <person name="Blanchin S."/>
            <person name="Beckerich J.-M."/>
            <person name="Beyne E."/>
            <person name="Bleykasten C."/>
            <person name="Boisrame A."/>
            <person name="Boyer J."/>
            <person name="Cattolico L."/>
            <person name="Confanioleri F."/>
            <person name="de Daruvar A."/>
            <person name="Despons L."/>
            <person name="Fabre E."/>
            <person name="Fairhead C."/>
            <person name="Ferry-Dumazet H."/>
            <person name="Groppi A."/>
            <person name="Hantraye F."/>
            <person name="Hennequin C."/>
            <person name="Jauniaux N."/>
            <person name="Joyet P."/>
            <person name="Kachouri R."/>
            <person name="Kerrest A."/>
            <person name="Koszul R."/>
            <person name="Lemaire M."/>
            <person name="Lesur I."/>
            <person name="Ma L."/>
            <person name="Muller H."/>
            <person name="Nicaud J.-M."/>
            <person name="Nikolski M."/>
            <person name="Oztas S."/>
            <person name="Ozier-Kalogeropoulos O."/>
            <person name="Pellenz S."/>
            <person name="Potier S."/>
            <person name="Richard G.-F."/>
            <person name="Straub M.-L."/>
            <person name="Suleau A."/>
            <person name="Swennen D."/>
            <person name="Tekaia F."/>
            <person name="Wesolowski-Louvel M."/>
            <person name="Westhof E."/>
            <person name="Wirth B."/>
            <person name="Zeniou-Meyer M."/>
            <person name="Zivanovic Y."/>
            <person name="Bolotin-Fukuhara M."/>
            <person name="Thierry A."/>
            <person name="Bouchier C."/>
            <person name="Caudron B."/>
            <person name="Scarpelli C."/>
            <person name="Gaillardin C."/>
            <person name="Weissenbach J."/>
            <person name="Wincker P."/>
            <person name="Souciet J.-L."/>
        </authorList>
    </citation>
    <scope>NUCLEOTIDE SEQUENCE [LARGE SCALE GENOMIC DNA]</scope>
    <source>
        <strain>ATCC 8585 / CBS 2359 / DSM 70799 / NBRC 1267 / NRRL Y-1140 / WM37</strain>
    </source>
</reference>
<protein>
    <recommendedName>
        <fullName>Cytochrome c oxidase subunit 9, mitochondrial</fullName>
    </recommendedName>
    <alternativeName>
        <fullName>Cytochrome c oxidase polypeptide VIIA</fullName>
    </alternativeName>
</protein>
<evidence type="ECO:0000250" key="1">
    <source>
        <dbReference type="UniProtKB" id="P07255"/>
    </source>
</evidence>
<evidence type="ECO:0000255" key="2"/>
<evidence type="ECO:0000305" key="3"/>
<organism>
    <name type="scientific">Kluyveromyces lactis (strain ATCC 8585 / CBS 2359 / DSM 70799 / NBRC 1267 / NRRL Y-1140 / WM37)</name>
    <name type="common">Yeast</name>
    <name type="synonym">Candida sphaerica</name>
    <dbReference type="NCBI Taxonomy" id="284590"/>
    <lineage>
        <taxon>Eukaryota</taxon>
        <taxon>Fungi</taxon>
        <taxon>Dikarya</taxon>
        <taxon>Ascomycota</taxon>
        <taxon>Saccharomycotina</taxon>
        <taxon>Saccharomycetes</taxon>
        <taxon>Saccharomycetales</taxon>
        <taxon>Saccharomycetaceae</taxon>
        <taxon>Kluyveromyces</taxon>
    </lineage>
</organism>
<dbReference type="EMBL" id="CR382122">
    <property type="protein sequence ID" value="CAH02073.1"/>
    <property type="molecule type" value="Genomic_DNA"/>
</dbReference>
<dbReference type="RefSeq" id="XP_451680.1">
    <property type="nucleotide sequence ID" value="XM_451680.1"/>
</dbReference>
<dbReference type="SMR" id="Q6CWK9"/>
<dbReference type="FunCoup" id="Q6CWK9">
    <property type="interactions" value="114"/>
</dbReference>
<dbReference type="STRING" id="284590.Q6CWK9"/>
<dbReference type="PaxDb" id="284590-Q6CWK9"/>
<dbReference type="KEGG" id="kla:KLLA0_B03289g"/>
<dbReference type="eggNOG" id="ENOG502SBM8">
    <property type="taxonomic scope" value="Eukaryota"/>
</dbReference>
<dbReference type="HOGENOM" id="CLU_196969_0_0_1"/>
<dbReference type="InParanoid" id="Q6CWK9"/>
<dbReference type="OMA" id="ASYWWWG"/>
<dbReference type="UniPathway" id="UPA00705"/>
<dbReference type="Proteomes" id="UP000000598">
    <property type="component" value="Chromosome B"/>
</dbReference>
<dbReference type="GO" id="GO:0005743">
    <property type="term" value="C:mitochondrial inner membrane"/>
    <property type="evidence" value="ECO:0007669"/>
    <property type="project" value="UniProtKB-SubCell"/>
</dbReference>
<dbReference type="GO" id="GO:0004129">
    <property type="term" value="F:cytochrome-c oxidase activity"/>
    <property type="evidence" value="ECO:0007669"/>
    <property type="project" value="TreeGrafter"/>
</dbReference>
<dbReference type="GO" id="GO:0006123">
    <property type="term" value="P:mitochondrial electron transport, cytochrome c to oxygen"/>
    <property type="evidence" value="ECO:0007669"/>
    <property type="project" value="InterPro"/>
</dbReference>
<dbReference type="CDD" id="cd22888">
    <property type="entry name" value="CcO_VIIa_fungal"/>
    <property type="match status" value="1"/>
</dbReference>
<dbReference type="InterPro" id="IPR014368">
    <property type="entry name" value="Cyt_c_oxidase_su7a_fun"/>
</dbReference>
<dbReference type="PANTHER" id="PTHR28264:SF1">
    <property type="entry name" value="CYTOCHROME C OXIDASE SUBUNIT 6C"/>
    <property type="match status" value="1"/>
</dbReference>
<dbReference type="PANTHER" id="PTHR28264">
    <property type="entry name" value="CYTOCHROME C OXIDASE SUBUNIT 7A"/>
    <property type="match status" value="1"/>
</dbReference>
<dbReference type="PIRSF" id="PIRSF000283">
    <property type="entry name" value="COX9"/>
    <property type="match status" value="1"/>
</dbReference>
<proteinExistence type="inferred from homology"/>
<name>COX9_KLULA</name>
<accession>Q6CWK9</accession>
<keyword id="KW-0472">Membrane</keyword>
<keyword id="KW-0496">Mitochondrion</keyword>
<keyword id="KW-0999">Mitochondrion inner membrane</keyword>
<keyword id="KW-0560">Oxidoreductase</keyword>
<keyword id="KW-1185">Reference proteome</keyword>
<keyword id="KW-0812">Transmembrane</keyword>
<keyword id="KW-1133">Transmembrane helix</keyword>